<keyword id="KW-0472">Membrane</keyword>
<keyword id="KW-0496">Mitochondrion</keyword>
<keyword id="KW-0999">Mitochondrion inner membrane</keyword>
<keyword id="KW-1185">Reference proteome</keyword>
<keyword id="KW-0677">Repeat</keyword>
<keyword id="KW-0812">Transmembrane</keyword>
<keyword id="KW-1133">Transmembrane helix</keyword>
<keyword id="KW-0813">Transport</keyword>
<sequence length="328" mass="35391">MSAGGEHLKDEGTRRQVVLAGGIAGLISRFCIAPLDVVKIRLQLQIHSLSDPTSHAHITGPVYKGTLSTIKTILREEGLTGLWKGNIPAELLYVCYGGIQFTTYRTTTQLLAQLDPHRLPQPIESFISGALGGGIATAATYPLDLLRTRFAAQGSGDNRVYESLFASLRDIAKTEGTVGFFRGCSAAVGQIVPYMGLFFATYEALRPVMATAPELSPIPLPPGSGDAAAGIVASVLAKTGVFPLDLVRKRLQVQGPTRALYVHRNIPEYRGVFNTMGLIFRTQGLRGLYRGLTVSLVKAAPASAVTMWTYERALKLLREHEIAAGRDE</sequence>
<accession>Q5AVW1</accession>
<accession>C8VBQ6</accession>
<evidence type="ECO:0000250" key="1"/>
<evidence type="ECO:0000255" key="2"/>
<evidence type="ECO:0000305" key="3"/>
<gene>
    <name type="primary">tpc1</name>
    <name type="ORF">AN7569</name>
</gene>
<reference key="1">
    <citation type="journal article" date="2005" name="Nature">
        <title>Sequencing of Aspergillus nidulans and comparative analysis with A. fumigatus and A. oryzae.</title>
        <authorList>
            <person name="Galagan J.E."/>
            <person name="Calvo S.E."/>
            <person name="Cuomo C."/>
            <person name="Ma L.-J."/>
            <person name="Wortman J.R."/>
            <person name="Batzoglou S."/>
            <person name="Lee S.-I."/>
            <person name="Bastuerkmen M."/>
            <person name="Spevak C.C."/>
            <person name="Clutterbuck J."/>
            <person name="Kapitonov V."/>
            <person name="Jurka J."/>
            <person name="Scazzocchio C."/>
            <person name="Farman M.L."/>
            <person name="Butler J."/>
            <person name="Purcell S."/>
            <person name="Harris S."/>
            <person name="Braus G.H."/>
            <person name="Draht O."/>
            <person name="Busch S."/>
            <person name="D'Enfert C."/>
            <person name="Bouchier C."/>
            <person name="Goldman G.H."/>
            <person name="Bell-Pedersen D."/>
            <person name="Griffiths-Jones S."/>
            <person name="Doonan J.H."/>
            <person name="Yu J."/>
            <person name="Vienken K."/>
            <person name="Pain A."/>
            <person name="Freitag M."/>
            <person name="Selker E.U."/>
            <person name="Archer D.B."/>
            <person name="Penalva M.A."/>
            <person name="Oakley B.R."/>
            <person name="Momany M."/>
            <person name="Tanaka T."/>
            <person name="Kumagai T."/>
            <person name="Asai K."/>
            <person name="Machida M."/>
            <person name="Nierman W.C."/>
            <person name="Denning D.W."/>
            <person name="Caddick M.X."/>
            <person name="Hynes M."/>
            <person name="Paoletti M."/>
            <person name="Fischer R."/>
            <person name="Miller B.L."/>
            <person name="Dyer P.S."/>
            <person name="Sachs M.S."/>
            <person name="Osmani S.A."/>
            <person name="Birren B.W."/>
        </authorList>
    </citation>
    <scope>NUCLEOTIDE SEQUENCE [LARGE SCALE GENOMIC DNA]</scope>
    <source>
        <strain>FGSC A4 / ATCC 38163 / CBS 112.46 / NRRL 194 / M139</strain>
    </source>
</reference>
<reference key="2">
    <citation type="journal article" date="2009" name="Fungal Genet. Biol.">
        <title>The 2008 update of the Aspergillus nidulans genome annotation: a community effort.</title>
        <authorList>
            <person name="Wortman J.R."/>
            <person name="Gilsenan J.M."/>
            <person name="Joardar V."/>
            <person name="Deegan J."/>
            <person name="Clutterbuck J."/>
            <person name="Andersen M.R."/>
            <person name="Archer D."/>
            <person name="Bencina M."/>
            <person name="Braus G."/>
            <person name="Coutinho P."/>
            <person name="von Dohren H."/>
            <person name="Doonan J."/>
            <person name="Driessen A.J."/>
            <person name="Durek P."/>
            <person name="Espeso E."/>
            <person name="Fekete E."/>
            <person name="Flipphi M."/>
            <person name="Estrada C.G."/>
            <person name="Geysens S."/>
            <person name="Goldman G."/>
            <person name="de Groot P.W."/>
            <person name="Hansen K."/>
            <person name="Harris S.D."/>
            <person name="Heinekamp T."/>
            <person name="Helmstaedt K."/>
            <person name="Henrissat B."/>
            <person name="Hofmann G."/>
            <person name="Homan T."/>
            <person name="Horio T."/>
            <person name="Horiuchi H."/>
            <person name="James S."/>
            <person name="Jones M."/>
            <person name="Karaffa L."/>
            <person name="Karanyi Z."/>
            <person name="Kato M."/>
            <person name="Keller N."/>
            <person name="Kelly D.E."/>
            <person name="Kiel J.A."/>
            <person name="Kim J.M."/>
            <person name="van der Klei I.J."/>
            <person name="Klis F.M."/>
            <person name="Kovalchuk A."/>
            <person name="Krasevec N."/>
            <person name="Kubicek C.P."/>
            <person name="Liu B."/>
            <person name="Maccabe A."/>
            <person name="Meyer V."/>
            <person name="Mirabito P."/>
            <person name="Miskei M."/>
            <person name="Mos M."/>
            <person name="Mullins J."/>
            <person name="Nelson D.R."/>
            <person name="Nielsen J."/>
            <person name="Oakley B.R."/>
            <person name="Osmani S.A."/>
            <person name="Pakula T."/>
            <person name="Paszewski A."/>
            <person name="Paulsen I."/>
            <person name="Pilsyk S."/>
            <person name="Pocsi I."/>
            <person name="Punt P.J."/>
            <person name="Ram A.F."/>
            <person name="Ren Q."/>
            <person name="Robellet X."/>
            <person name="Robson G."/>
            <person name="Seiboth B."/>
            <person name="van Solingen P."/>
            <person name="Specht T."/>
            <person name="Sun J."/>
            <person name="Taheri-Talesh N."/>
            <person name="Takeshita N."/>
            <person name="Ussery D."/>
            <person name="vanKuyk P.A."/>
            <person name="Visser H."/>
            <person name="van de Vondervoort P.J."/>
            <person name="de Vries R.P."/>
            <person name="Walton J."/>
            <person name="Xiang X."/>
            <person name="Xiong Y."/>
            <person name="Zeng A.P."/>
            <person name="Brandt B.W."/>
            <person name="Cornell M.J."/>
            <person name="van den Hondel C.A."/>
            <person name="Visser J."/>
            <person name="Oliver S.G."/>
            <person name="Turner G."/>
        </authorList>
    </citation>
    <scope>GENOME REANNOTATION</scope>
    <source>
        <strain>FGSC A4 / ATCC 38163 / CBS 112.46 / NRRL 194 / M139</strain>
    </source>
</reference>
<organism>
    <name type="scientific">Emericella nidulans (strain FGSC A4 / ATCC 38163 / CBS 112.46 / NRRL 194 / M139)</name>
    <name type="common">Aspergillus nidulans</name>
    <dbReference type="NCBI Taxonomy" id="227321"/>
    <lineage>
        <taxon>Eukaryota</taxon>
        <taxon>Fungi</taxon>
        <taxon>Dikarya</taxon>
        <taxon>Ascomycota</taxon>
        <taxon>Pezizomycotina</taxon>
        <taxon>Eurotiomycetes</taxon>
        <taxon>Eurotiomycetidae</taxon>
        <taxon>Eurotiales</taxon>
        <taxon>Aspergillaceae</taxon>
        <taxon>Aspergillus</taxon>
        <taxon>Aspergillus subgen. Nidulantes</taxon>
    </lineage>
</organism>
<proteinExistence type="inferred from homology"/>
<protein>
    <recommendedName>
        <fullName>Mitochondrial thiamine pyrophosphate carrier 1</fullName>
    </recommendedName>
</protein>
<feature type="chain" id="PRO_0000320465" description="Mitochondrial thiamine pyrophosphate carrier 1">
    <location>
        <begin position="1"/>
        <end position="328"/>
    </location>
</feature>
<feature type="transmembrane region" description="Helical; Name=1" evidence="2">
    <location>
        <begin position="17"/>
        <end position="37"/>
    </location>
</feature>
<feature type="transmembrane region" description="Helical; Name=2" evidence="2">
    <location>
        <begin position="79"/>
        <end position="99"/>
    </location>
</feature>
<feature type="transmembrane region" description="Helical; Name=3" evidence="2">
    <location>
        <begin position="126"/>
        <end position="146"/>
    </location>
</feature>
<feature type="transmembrane region" description="Helical; Name=4" evidence="2">
    <location>
        <begin position="185"/>
        <end position="205"/>
    </location>
</feature>
<feature type="transmembrane region" description="Helical; Name=5" evidence="2">
    <location>
        <begin position="227"/>
        <end position="247"/>
    </location>
</feature>
<feature type="transmembrane region" description="Helical; Name=6" evidence="2">
    <location>
        <begin position="291"/>
        <end position="308"/>
    </location>
</feature>
<feature type="repeat" description="Solcar 1">
    <location>
        <begin position="12"/>
        <end position="110"/>
    </location>
</feature>
<feature type="repeat" description="Solcar 2">
    <location>
        <begin position="120"/>
        <end position="208"/>
    </location>
</feature>
<feature type="repeat" description="Solcar 3">
    <location>
        <begin position="221"/>
        <end position="316"/>
    </location>
</feature>
<comment type="function">
    <text evidence="1">Mitochondrial transporter that mediates uptake of thiamine pyrophosphate (ThPP) into mitochondria.</text>
</comment>
<comment type="subcellular location">
    <subcellularLocation>
        <location evidence="1">Mitochondrion inner membrane</location>
        <topology evidence="1">Multi-pass membrane protein</topology>
    </subcellularLocation>
</comment>
<comment type="similarity">
    <text evidence="3">Belongs to the mitochondrial carrier (TC 2.A.29) family.</text>
</comment>
<dbReference type="EMBL" id="AACD01000129">
    <property type="protein sequence ID" value="EAA62149.1"/>
    <property type="molecule type" value="Genomic_DNA"/>
</dbReference>
<dbReference type="EMBL" id="BN001304">
    <property type="protein sequence ID" value="CBF79646.1"/>
    <property type="molecule type" value="Genomic_DNA"/>
</dbReference>
<dbReference type="RefSeq" id="XP_680838.1">
    <property type="nucleotide sequence ID" value="XM_675746.1"/>
</dbReference>
<dbReference type="SMR" id="Q5AVW1"/>
<dbReference type="FunCoup" id="Q5AVW1">
    <property type="interactions" value="29"/>
</dbReference>
<dbReference type="STRING" id="227321.Q5AVW1"/>
<dbReference type="EnsemblFungi" id="CBF79646">
    <property type="protein sequence ID" value="CBF79646"/>
    <property type="gene ID" value="ANIA_07569"/>
</dbReference>
<dbReference type="KEGG" id="ani:ANIA_07569"/>
<dbReference type="VEuPathDB" id="FungiDB:AN7569"/>
<dbReference type="eggNOG" id="KOG0752">
    <property type="taxonomic scope" value="Eukaryota"/>
</dbReference>
<dbReference type="HOGENOM" id="CLU_015166_10_3_1"/>
<dbReference type="InParanoid" id="Q5AVW1"/>
<dbReference type="OMA" id="MYVCYGA"/>
<dbReference type="OrthoDB" id="18574at2759"/>
<dbReference type="Proteomes" id="UP000000560">
    <property type="component" value="Chromosome IV"/>
</dbReference>
<dbReference type="GO" id="GO:0005743">
    <property type="term" value="C:mitochondrial inner membrane"/>
    <property type="evidence" value="ECO:0000318"/>
    <property type="project" value="GO_Central"/>
</dbReference>
<dbReference type="GO" id="GO:0015234">
    <property type="term" value="F:thiamine transmembrane transporter activity"/>
    <property type="evidence" value="ECO:0000318"/>
    <property type="project" value="GO_Central"/>
</dbReference>
<dbReference type="GO" id="GO:0030974">
    <property type="term" value="P:thiamine pyrophosphate transmembrane transport"/>
    <property type="evidence" value="ECO:0000318"/>
    <property type="project" value="GO_Central"/>
</dbReference>
<dbReference type="FunFam" id="1.50.40.10:FF:000011">
    <property type="entry name" value="Mitochondrial thiamine pyrophosphate carrier 1"/>
    <property type="match status" value="1"/>
</dbReference>
<dbReference type="Gene3D" id="1.50.40.10">
    <property type="entry name" value="Mitochondrial carrier domain"/>
    <property type="match status" value="1"/>
</dbReference>
<dbReference type="InterPro" id="IPR002067">
    <property type="entry name" value="Mit_carrier"/>
</dbReference>
<dbReference type="InterPro" id="IPR018108">
    <property type="entry name" value="Mitochondrial_sb/sol_carrier"/>
</dbReference>
<dbReference type="InterPro" id="IPR023395">
    <property type="entry name" value="Mt_carrier_dom_sf"/>
</dbReference>
<dbReference type="PANTHER" id="PTHR24089">
    <property type="entry name" value="SOLUTE CARRIER FAMILY 25"/>
    <property type="match status" value="1"/>
</dbReference>
<dbReference type="Pfam" id="PF00153">
    <property type="entry name" value="Mito_carr"/>
    <property type="match status" value="3"/>
</dbReference>
<dbReference type="PRINTS" id="PR00926">
    <property type="entry name" value="MITOCARRIER"/>
</dbReference>
<dbReference type="SUPFAM" id="SSF103506">
    <property type="entry name" value="Mitochondrial carrier"/>
    <property type="match status" value="1"/>
</dbReference>
<dbReference type="PROSITE" id="PS50920">
    <property type="entry name" value="SOLCAR"/>
    <property type="match status" value="3"/>
</dbReference>
<name>TPC1_EMENI</name>